<feature type="signal peptide" evidence="3">
    <location>
        <begin position="1"/>
        <end position="19"/>
    </location>
</feature>
<feature type="chain" id="PRO_0000341488" description="Pheromone-binding protein Gp-9" evidence="3">
    <location>
        <begin position="20"/>
        <end position="153"/>
    </location>
</feature>
<feature type="disulfide bond" evidence="2">
    <location>
        <begin position="37"/>
        <end position="77"/>
    </location>
</feature>
<feature type="disulfide bond" evidence="2">
    <location>
        <begin position="73"/>
        <end position="129"/>
    </location>
</feature>
<feature type="disulfide bond" evidence="2">
    <location>
        <begin position="118"/>
        <end position="138"/>
    </location>
</feature>
<name>PBGP9_SOLSX</name>
<protein>
    <recommendedName>
        <fullName>Pheromone-binding protein Gp-9</fullName>
        <shortName>PBP</shortName>
    </recommendedName>
    <alternativeName>
        <fullName>Putative odorant-binding protein Gp-9</fullName>
    </alternativeName>
</protein>
<gene>
    <name evidence="5" type="primary">Gp-9</name>
</gene>
<proteinExistence type="inferred from homology"/>
<organism>
    <name type="scientific">Solenopsis sp. (strain X)</name>
    <name type="common">Fire ant</name>
    <dbReference type="NCBI Taxonomy" id="326717"/>
    <lineage>
        <taxon>Eukaryota</taxon>
        <taxon>Metazoa</taxon>
        <taxon>Ecdysozoa</taxon>
        <taxon>Arthropoda</taxon>
        <taxon>Hexapoda</taxon>
        <taxon>Insecta</taxon>
        <taxon>Pterygota</taxon>
        <taxon>Neoptera</taxon>
        <taxon>Endopterygota</taxon>
        <taxon>Hymenoptera</taxon>
        <taxon>Apocrita</taxon>
        <taxon>Aculeata</taxon>
        <taxon>Formicoidea</taxon>
        <taxon>Formicidae</taxon>
        <taxon>Myrmicinae</taxon>
        <taxon>Solenopsis</taxon>
    </lineage>
</organism>
<reference evidence="5" key="1">
    <citation type="journal article" date="2007" name="PLoS ONE">
        <title>Molecular variation at a candidate gene implicated in the regulation of fire ant social behavior.</title>
        <authorList>
            <person name="Gotzek D."/>
            <person name="Shoemaker D.D."/>
            <person name="Ross K.G."/>
        </authorList>
    </citation>
    <scope>NUCLEOTIDE SEQUENCE [GENOMIC DNA]</scope>
    <source>
        <strain evidence="5">AR-44a</strain>
    </source>
</reference>
<evidence type="ECO:0000250" key="1"/>
<evidence type="ECO:0000250" key="2">
    <source>
        <dbReference type="UniProtKB" id="P20797"/>
    </source>
</evidence>
<evidence type="ECO:0000250" key="3">
    <source>
        <dbReference type="UniProtKB" id="Q8WP90"/>
    </source>
</evidence>
<evidence type="ECO:0000255" key="4"/>
<evidence type="ECO:0000312" key="5">
    <source>
        <dbReference type="EMBL" id="ABX25624.1"/>
    </source>
</evidence>
<dbReference type="EMBL" id="EU220045">
    <property type="protein sequence ID" value="ABX25624.1"/>
    <property type="molecule type" value="Genomic_DNA"/>
</dbReference>
<dbReference type="SMR" id="A9LKE6"/>
<dbReference type="GO" id="GO:0005615">
    <property type="term" value="C:extracellular space"/>
    <property type="evidence" value="ECO:0000250"/>
    <property type="project" value="UniProtKB"/>
</dbReference>
<dbReference type="GO" id="GO:0005550">
    <property type="term" value="F:pheromone binding"/>
    <property type="evidence" value="ECO:0007669"/>
    <property type="project" value="UniProtKB-KW"/>
</dbReference>
<dbReference type="GO" id="GO:0019236">
    <property type="term" value="P:response to pheromone"/>
    <property type="evidence" value="ECO:0007669"/>
    <property type="project" value="UniProtKB-KW"/>
</dbReference>
<dbReference type="GO" id="GO:0035176">
    <property type="term" value="P:social behavior"/>
    <property type="evidence" value="ECO:0000250"/>
    <property type="project" value="UniProtKB"/>
</dbReference>
<dbReference type="CDD" id="cd23992">
    <property type="entry name" value="PBP_GOBP"/>
    <property type="match status" value="1"/>
</dbReference>
<dbReference type="FunFam" id="1.10.238.20:FF:000004">
    <property type="entry name" value="Pheromone-binding protein Gp-9"/>
    <property type="match status" value="1"/>
</dbReference>
<dbReference type="Gene3D" id="1.10.238.20">
    <property type="entry name" value="Pheromone/general odorant binding protein domain"/>
    <property type="match status" value="1"/>
</dbReference>
<dbReference type="InterPro" id="IPR006170">
    <property type="entry name" value="PBP/GOBP"/>
</dbReference>
<dbReference type="InterPro" id="IPR036728">
    <property type="entry name" value="PBP_GOBP_sf"/>
</dbReference>
<dbReference type="InterPro" id="IPR022354">
    <property type="entry name" value="Pheromone-bd_protein_Gp-9"/>
</dbReference>
<dbReference type="Pfam" id="PF01395">
    <property type="entry name" value="PBP_GOBP"/>
    <property type="match status" value="1"/>
</dbReference>
<dbReference type="PRINTS" id="PR02007">
    <property type="entry name" value="ODORANTBPGP9"/>
</dbReference>
<dbReference type="SUPFAM" id="SSF47565">
    <property type="entry name" value="Insect pheromone/odorant-binding proteins"/>
    <property type="match status" value="1"/>
</dbReference>
<accession>A9LKE6</accession>
<keyword id="KW-0085">Behavior</keyword>
<keyword id="KW-1015">Disulfide bond</keyword>
<keyword id="KW-0589">Pheromone response</keyword>
<keyword id="KW-0590">Pheromone-binding</keyword>
<keyword id="KW-0964">Secreted</keyword>
<keyword id="KW-0732">Signal</keyword>
<keyword id="KW-0813">Transport</keyword>
<comment type="function">
    <text evidence="3">Colony queen number, a major feature of social organization, is associated with worker genotype for Gp-9. Colonies are headed by either a single reproductive queen (monogyne form) or multiple queens (polygyne form). Differences in worker Gp-9 genotypes between social forms may cause differences in workers' abilities to recognize queens and regulate their numbers (By similarity).</text>
</comment>
<comment type="subunit">
    <text evidence="2">Homodimer.</text>
</comment>
<comment type="subcellular location">
    <subcellularLocation>
        <location evidence="1">Secreted</location>
    </subcellularLocation>
</comment>
<comment type="similarity">
    <text evidence="4">Belongs to the PBP/GOBP family.</text>
</comment>
<sequence>MKTFVLHIFIFALVAFASASRDSAKKIGSQYDNYATCLAEHSLTEDDIFSIGEVSSGQHKTNHEDTELHKNGCVMQCLLEKDGLMSGADYDEEKIREDYIKETGAQPGDQRIEALNACMQETKDMEDKCDKSLLLVACVLAAEAVLADSNEGA</sequence>